<comment type="function">
    <text evidence="1">Catalyzes the reversible retro-aldol cleavage of both 5-keto-4-deoxy-D-glucarate and 2-keto-3-deoxy-D-glucarate to pyruvate and tartronic semialdehyde.</text>
</comment>
<comment type="catalytic activity">
    <reaction evidence="1">
        <text>5-dehydro-4-deoxy-D-glucarate = 2-hydroxy-3-oxopropanoate + pyruvate</text>
        <dbReference type="Rhea" id="RHEA:27726"/>
        <dbReference type="ChEBI" id="CHEBI:15361"/>
        <dbReference type="ChEBI" id="CHEBI:42819"/>
        <dbReference type="ChEBI" id="CHEBI:57978"/>
    </reaction>
</comment>
<comment type="catalytic activity">
    <reaction evidence="1">
        <text>2-dehydro-3-deoxy-D-glucarate = 2-hydroxy-3-oxopropanoate + pyruvate</text>
        <dbReference type="Rhea" id="RHEA:10268"/>
        <dbReference type="ChEBI" id="CHEBI:15361"/>
        <dbReference type="ChEBI" id="CHEBI:57978"/>
        <dbReference type="ChEBI" id="CHEBI:58098"/>
        <dbReference type="EC" id="4.1.2.20"/>
    </reaction>
</comment>
<comment type="cofactor">
    <cofactor evidence="1">
        <name>Mg(2+)</name>
        <dbReference type="ChEBI" id="CHEBI:18420"/>
    </cofactor>
    <text evidence="1">Binds 1 Mg(2+) ion per subunit.</text>
</comment>
<comment type="pathway">
    <text evidence="1">Carbohydrate acid metabolism; galactarate degradation; D-glycerate from galactarate: step 2/3.</text>
</comment>
<comment type="subunit">
    <text evidence="1">Homohexamer; trimer of dimers.</text>
</comment>
<comment type="similarity">
    <text evidence="1">Belongs to the HpcH/HpaI aldolase family. KDGluc aldolase subfamily.</text>
</comment>
<proteinExistence type="inferred from homology"/>
<name>GARL_ECO55</name>
<gene>
    <name evidence="1" type="primary">garL</name>
    <name type="ordered locus">EC55989_3544</name>
</gene>
<evidence type="ECO:0000255" key="1">
    <source>
        <dbReference type="HAMAP-Rule" id="MF_01291"/>
    </source>
</evidence>
<sequence length="256" mass="27399">MNNDVFPNKFKAALAAKQVQIGCWSALSNPISTEVLGLAGFDWLVLDGEHAPNDISTFIPQLMALKGSASAPVVRVPTNEPVIIKRLLDIGFYNFLIPFVETKEEAEQAVASTRYPPEGIRGVSVSHRANMFGTVADYFAQSNKNITILVQIESQQGVDNVDAIAATEGVDGIFVGPSDLAAALGHLGNASHPDVQKAIQHIFNRASAHGKPSGILAPVEADARRYLEWGATFVAVGSDLGVFRSATQKLADTFKK</sequence>
<organism>
    <name type="scientific">Escherichia coli (strain 55989 / EAEC)</name>
    <dbReference type="NCBI Taxonomy" id="585055"/>
    <lineage>
        <taxon>Bacteria</taxon>
        <taxon>Pseudomonadati</taxon>
        <taxon>Pseudomonadota</taxon>
        <taxon>Gammaproteobacteria</taxon>
        <taxon>Enterobacterales</taxon>
        <taxon>Enterobacteriaceae</taxon>
        <taxon>Escherichia</taxon>
    </lineage>
</organism>
<reference key="1">
    <citation type="journal article" date="2009" name="PLoS Genet.">
        <title>Organised genome dynamics in the Escherichia coli species results in highly diverse adaptive paths.</title>
        <authorList>
            <person name="Touchon M."/>
            <person name="Hoede C."/>
            <person name="Tenaillon O."/>
            <person name="Barbe V."/>
            <person name="Baeriswyl S."/>
            <person name="Bidet P."/>
            <person name="Bingen E."/>
            <person name="Bonacorsi S."/>
            <person name="Bouchier C."/>
            <person name="Bouvet O."/>
            <person name="Calteau A."/>
            <person name="Chiapello H."/>
            <person name="Clermont O."/>
            <person name="Cruveiller S."/>
            <person name="Danchin A."/>
            <person name="Diard M."/>
            <person name="Dossat C."/>
            <person name="Karoui M.E."/>
            <person name="Frapy E."/>
            <person name="Garry L."/>
            <person name="Ghigo J.M."/>
            <person name="Gilles A.M."/>
            <person name="Johnson J."/>
            <person name="Le Bouguenec C."/>
            <person name="Lescat M."/>
            <person name="Mangenot S."/>
            <person name="Martinez-Jehanne V."/>
            <person name="Matic I."/>
            <person name="Nassif X."/>
            <person name="Oztas S."/>
            <person name="Petit M.A."/>
            <person name="Pichon C."/>
            <person name="Rouy Z."/>
            <person name="Ruf C.S."/>
            <person name="Schneider D."/>
            <person name="Tourret J."/>
            <person name="Vacherie B."/>
            <person name="Vallenet D."/>
            <person name="Medigue C."/>
            <person name="Rocha E.P.C."/>
            <person name="Denamur E."/>
        </authorList>
    </citation>
    <scope>NUCLEOTIDE SEQUENCE [LARGE SCALE GENOMIC DNA]</scope>
    <source>
        <strain>55989 / EAEC</strain>
    </source>
</reference>
<protein>
    <recommendedName>
        <fullName evidence="1">5-keto-4-deoxy-D-glucarate aldolase</fullName>
        <shortName evidence="1">KDGluc aldolase</shortName>
        <shortName evidence="1">KDGlucA</shortName>
        <ecNumber evidence="1">4.1.2.20</ecNumber>
    </recommendedName>
    <alternativeName>
        <fullName evidence="1">2-dehydro-3-deoxy-D-glucarate aldolase</fullName>
    </alternativeName>
    <alternativeName>
        <fullName evidence="1">2-keto-3-deoxy-D-glucarate aldolase</fullName>
    </alternativeName>
    <alternativeName>
        <fullName evidence="1">5-dehydro-4-deoxy-D-glucarate aldolase</fullName>
    </alternativeName>
    <alternativeName>
        <fullName evidence="1">Alpha-keto-beta-deoxy-D-glucarate aldolase</fullName>
    </alternativeName>
</protein>
<accession>B7LH62</accession>
<dbReference type="EC" id="4.1.2.20" evidence="1"/>
<dbReference type="EMBL" id="CU928145">
    <property type="protein sequence ID" value="CAU99724.1"/>
    <property type="molecule type" value="Genomic_DNA"/>
</dbReference>
<dbReference type="RefSeq" id="WP_001058227.1">
    <property type="nucleotide sequence ID" value="NZ_CP028304.1"/>
</dbReference>
<dbReference type="SMR" id="B7LH62"/>
<dbReference type="GeneID" id="93778860"/>
<dbReference type="KEGG" id="eck:EC55989_3544"/>
<dbReference type="HOGENOM" id="CLU_059964_1_0_6"/>
<dbReference type="UniPathway" id="UPA00565">
    <property type="reaction ID" value="UER00630"/>
</dbReference>
<dbReference type="Proteomes" id="UP000000746">
    <property type="component" value="Chromosome"/>
</dbReference>
<dbReference type="GO" id="GO:0005737">
    <property type="term" value="C:cytoplasm"/>
    <property type="evidence" value="ECO:0007669"/>
    <property type="project" value="TreeGrafter"/>
</dbReference>
<dbReference type="GO" id="GO:0008672">
    <property type="term" value="F:2-dehydro-3-deoxyglucarate aldolase activity"/>
    <property type="evidence" value="ECO:0007669"/>
    <property type="project" value="UniProtKB-UniRule"/>
</dbReference>
<dbReference type="GO" id="GO:0000287">
    <property type="term" value="F:magnesium ion binding"/>
    <property type="evidence" value="ECO:0007669"/>
    <property type="project" value="UniProtKB-UniRule"/>
</dbReference>
<dbReference type="GO" id="GO:0042838">
    <property type="term" value="P:D-glucarate catabolic process"/>
    <property type="evidence" value="ECO:0007669"/>
    <property type="project" value="UniProtKB-UniRule"/>
</dbReference>
<dbReference type="GO" id="GO:0046392">
    <property type="term" value="P:galactarate catabolic process"/>
    <property type="evidence" value="ECO:0007669"/>
    <property type="project" value="UniProtKB-UniRule"/>
</dbReference>
<dbReference type="FunFam" id="3.20.20.60:FF:000004">
    <property type="entry name" value="5-keto-4-deoxy-D-glucarate aldolase"/>
    <property type="match status" value="1"/>
</dbReference>
<dbReference type="Gene3D" id="3.20.20.60">
    <property type="entry name" value="Phosphoenolpyruvate-binding domains"/>
    <property type="match status" value="1"/>
</dbReference>
<dbReference type="HAMAP" id="MF_01291">
    <property type="entry name" value="KDGluc_aldolase"/>
    <property type="match status" value="1"/>
</dbReference>
<dbReference type="InterPro" id="IPR005000">
    <property type="entry name" value="Aldolase/citrate-lyase_domain"/>
</dbReference>
<dbReference type="InterPro" id="IPR017648">
    <property type="entry name" value="GarL"/>
</dbReference>
<dbReference type="InterPro" id="IPR050251">
    <property type="entry name" value="HpcH-HpaI_aldolase"/>
</dbReference>
<dbReference type="InterPro" id="IPR015813">
    <property type="entry name" value="Pyrv/PenolPyrv_kinase-like_dom"/>
</dbReference>
<dbReference type="InterPro" id="IPR040442">
    <property type="entry name" value="Pyrv_kinase-like_dom_sf"/>
</dbReference>
<dbReference type="NCBIfam" id="TIGR03239">
    <property type="entry name" value="GarL"/>
    <property type="match status" value="1"/>
</dbReference>
<dbReference type="NCBIfam" id="NF007849">
    <property type="entry name" value="PRK10558.1"/>
    <property type="match status" value="1"/>
</dbReference>
<dbReference type="PANTHER" id="PTHR30502">
    <property type="entry name" value="2-KETO-3-DEOXY-L-RHAMNONATE ALDOLASE"/>
    <property type="match status" value="1"/>
</dbReference>
<dbReference type="PANTHER" id="PTHR30502:SF4">
    <property type="entry name" value="5-KETO-4-DEOXY-D-GLUCARATE ALDOLASE"/>
    <property type="match status" value="1"/>
</dbReference>
<dbReference type="Pfam" id="PF03328">
    <property type="entry name" value="HpcH_HpaI"/>
    <property type="match status" value="1"/>
</dbReference>
<dbReference type="SUPFAM" id="SSF51621">
    <property type="entry name" value="Phosphoenolpyruvate/pyruvate domain"/>
    <property type="match status" value="1"/>
</dbReference>
<feature type="chain" id="PRO_1000165272" description="5-keto-4-deoxy-D-glucarate aldolase">
    <location>
        <begin position="1"/>
        <end position="256"/>
    </location>
</feature>
<feature type="active site" description="Proton acceptor" evidence="1">
    <location>
        <position position="50"/>
    </location>
</feature>
<feature type="binding site" evidence="1">
    <location>
        <position position="151"/>
    </location>
    <ligand>
        <name>substrate</name>
    </ligand>
</feature>
<feature type="binding site" evidence="1">
    <location>
        <position position="153"/>
    </location>
    <ligand>
        <name>Mg(2+)</name>
        <dbReference type="ChEBI" id="CHEBI:18420"/>
    </ligand>
</feature>
<feature type="binding site" evidence="1">
    <location>
        <position position="178"/>
    </location>
    <ligand>
        <name>substrate</name>
    </ligand>
</feature>
<feature type="binding site" evidence="1">
    <location>
        <position position="179"/>
    </location>
    <ligand>
        <name>Mg(2+)</name>
        <dbReference type="ChEBI" id="CHEBI:18420"/>
    </ligand>
</feature>
<feature type="binding site" evidence="1">
    <location>
        <position position="179"/>
    </location>
    <ligand>
        <name>substrate</name>
    </ligand>
</feature>
<feature type="site" description="Transition state stabilizer" evidence="1">
    <location>
        <position position="75"/>
    </location>
</feature>
<feature type="site" description="Increases basicity of active site His" evidence="1">
    <location>
        <position position="89"/>
    </location>
</feature>
<keyword id="KW-0456">Lyase</keyword>
<keyword id="KW-0460">Magnesium</keyword>
<keyword id="KW-0479">Metal-binding</keyword>
<keyword id="KW-1185">Reference proteome</keyword>